<proteinExistence type="predicted"/>
<protein>
    <recommendedName>
        <fullName>Uncharacterized 15.1 kDa protein</fullName>
    </recommendedName>
    <alternativeName>
        <fullName>ORF125</fullName>
    </alternativeName>
</protein>
<accession>O78420</accession>
<reference key="1">
    <citation type="journal article" date="1999" name="J. Mol. Evol.">
        <title>The plastid genome of the cryptophyte alga, Guillardia theta: complete sequence and conserved synteny groups confirm its common ancestry with red algae.</title>
        <authorList>
            <person name="Douglas S.E."/>
            <person name="Penny S.L."/>
        </authorList>
    </citation>
    <scope>NUCLEOTIDE SEQUENCE [LARGE SCALE GENOMIC DNA]</scope>
</reference>
<dbReference type="EMBL" id="AF041468">
    <property type="protein sequence ID" value="AAC35605.1"/>
    <property type="molecule type" value="Genomic_DNA"/>
</dbReference>
<dbReference type="RefSeq" id="NP_050671.1">
    <property type="nucleotide sequence ID" value="NC_000926.1"/>
</dbReference>
<dbReference type="GeneID" id="1444454"/>
<dbReference type="HOGENOM" id="CLU_1996960_0_0_1"/>
<dbReference type="GO" id="GO:0009507">
    <property type="term" value="C:chloroplast"/>
    <property type="evidence" value="ECO:0007669"/>
    <property type="project" value="UniProtKB-SubCell"/>
</dbReference>
<geneLocation type="chloroplast"/>
<name>YCX1_GUITH</name>
<organism>
    <name type="scientific">Guillardia theta</name>
    <name type="common">Cryptophyte</name>
    <name type="synonym">Cryptomonas phi</name>
    <dbReference type="NCBI Taxonomy" id="55529"/>
    <lineage>
        <taxon>Eukaryota</taxon>
        <taxon>Cryptophyceae</taxon>
        <taxon>Pyrenomonadales</taxon>
        <taxon>Geminigeraceae</taxon>
        <taxon>Guillardia</taxon>
    </lineage>
</organism>
<comment type="subcellular location">
    <subcellularLocation>
        <location>Plastid</location>
        <location>Chloroplast</location>
    </subcellularLocation>
</comment>
<feature type="chain" id="PRO_0000217442" description="Uncharacterized 15.1 kDa protein">
    <location>
        <begin position="1"/>
        <end position="125"/>
    </location>
</feature>
<keyword id="KW-0150">Chloroplast</keyword>
<keyword id="KW-0934">Plastid</keyword>
<sequence length="125" mass="15057">MRHLFKLLFLYMQLNLLFYIPNKKSFLQLGEEKVYLTFQNSNTNLNIPYDSLLHKLNSDKNVFSKESYDNWSSFRQLIIDKYGRIQGILTESSKNSNLKNSIQLNNYLLQKTIYYEFLCIEFQLY</sequence>